<keyword id="KW-0256">Endoplasmic reticulum</keyword>
<keyword id="KW-0333">Golgi apparatus</keyword>
<keyword id="KW-0472">Membrane</keyword>
<keyword id="KW-1185">Reference proteome</keyword>
<keyword id="KW-0812">Transmembrane</keyword>
<keyword id="KW-1133">Transmembrane helix</keyword>
<name>MSPD1_RAT</name>
<sequence length="213" mass="24088">MHQQKRQPELVEGNLPVFVFPTELIFYADDQSTHKQVLTLYNPYEFALKFKVLCTTPNKYVVIDAAGAVKPQCCVDIVIRHRDVRSCHYGVIDKFRLQVSEQSQRKALGRKEVIATLLPSAKEQQKEEEEKRIKEHLTESVFFEQSCQPENRAVSSGPSLLTVFLGVVCIAALMLPTLGDMESLVPLYLHLSVNQKLVAAYILGLITMAILRT</sequence>
<organism>
    <name type="scientific">Rattus norvegicus</name>
    <name type="common">Rat</name>
    <dbReference type="NCBI Taxonomy" id="10116"/>
    <lineage>
        <taxon>Eukaryota</taxon>
        <taxon>Metazoa</taxon>
        <taxon>Chordata</taxon>
        <taxon>Craniata</taxon>
        <taxon>Vertebrata</taxon>
        <taxon>Euteleostomi</taxon>
        <taxon>Mammalia</taxon>
        <taxon>Eutheria</taxon>
        <taxon>Euarchontoglires</taxon>
        <taxon>Glires</taxon>
        <taxon>Rodentia</taxon>
        <taxon>Myomorpha</taxon>
        <taxon>Muroidea</taxon>
        <taxon>Muridae</taxon>
        <taxon>Murinae</taxon>
        <taxon>Rattus</taxon>
    </lineage>
</organism>
<reference key="1">
    <citation type="journal article" date="2004" name="Genome Res.">
        <title>The status, quality, and expansion of the NIH full-length cDNA project: the Mammalian Gene Collection (MGC).</title>
        <authorList>
            <consortium name="The MGC Project Team"/>
        </authorList>
    </citation>
    <scope>NUCLEOTIDE SEQUENCE [LARGE SCALE MRNA]</scope>
    <source>
        <tissue>Ovary</tissue>
    </source>
</reference>
<proteinExistence type="evidence at transcript level"/>
<evidence type="ECO:0000250" key="1">
    <source>
        <dbReference type="UniProtKB" id="Q8VEL0"/>
    </source>
</evidence>
<evidence type="ECO:0000255" key="2"/>
<evidence type="ECO:0000255" key="3">
    <source>
        <dbReference type="PROSITE-ProRule" id="PRU00132"/>
    </source>
</evidence>
<dbReference type="EMBL" id="BC086521">
    <property type="protein sequence ID" value="AAH86521.1"/>
    <property type="molecule type" value="mRNA"/>
</dbReference>
<dbReference type="RefSeq" id="NP_001014129.1">
    <property type="nucleotide sequence ID" value="NM_001014107.2"/>
</dbReference>
<dbReference type="RefSeq" id="NP_001421022.1">
    <property type="nucleotide sequence ID" value="NM_001434093.1"/>
</dbReference>
<dbReference type="RefSeq" id="XP_006251462.1">
    <property type="nucleotide sequence ID" value="XM_006251400.3"/>
</dbReference>
<dbReference type="RefSeq" id="XP_006257695.1">
    <property type="nucleotide sequence ID" value="XM_006257633.3"/>
</dbReference>
<dbReference type="RefSeq" id="XP_063136107.1">
    <property type="nucleotide sequence ID" value="XM_063280037.1"/>
</dbReference>
<dbReference type="RefSeq" id="XP_063136108.1">
    <property type="nucleotide sequence ID" value="XM_063280038.1"/>
</dbReference>
<dbReference type="RefSeq" id="XP_063136109.1">
    <property type="nucleotide sequence ID" value="XM_063280039.1"/>
</dbReference>
<dbReference type="SMR" id="Q5RJS6"/>
<dbReference type="FunCoup" id="Q5RJS6">
    <property type="interactions" value="990"/>
</dbReference>
<dbReference type="STRING" id="10116.ENSRNOP00000003192"/>
<dbReference type="PhosphoSitePlus" id="Q5RJS6"/>
<dbReference type="PaxDb" id="10116-ENSRNOP00000003192"/>
<dbReference type="GeneID" id="317312"/>
<dbReference type="KEGG" id="rno:317312"/>
<dbReference type="AGR" id="RGD:1359486"/>
<dbReference type="CTD" id="56180"/>
<dbReference type="RGD" id="1359486">
    <property type="gene designation" value="Mospd1"/>
</dbReference>
<dbReference type="VEuPathDB" id="HostDB:ENSRNOG00000058316"/>
<dbReference type="VEuPathDB" id="HostDB:ENSRNOG00000066239"/>
<dbReference type="eggNOG" id="KOG0439">
    <property type="taxonomic scope" value="Eukaryota"/>
</dbReference>
<dbReference type="HOGENOM" id="CLU_088040_0_0_1"/>
<dbReference type="InParanoid" id="Q5RJS6"/>
<dbReference type="OrthoDB" id="40231at9989"/>
<dbReference type="PhylomeDB" id="Q5RJS6"/>
<dbReference type="TreeFam" id="TF319778"/>
<dbReference type="PRO" id="PR:Q5RJS6"/>
<dbReference type="Proteomes" id="UP000002494">
    <property type="component" value="Chromosome 14"/>
</dbReference>
<dbReference type="Proteomes" id="UP000002494">
    <property type="component" value="Chromosome X"/>
</dbReference>
<dbReference type="Bgee" id="ENSRNOG00000002332">
    <property type="expression patterns" value="Expressed in heart and 17 other cell types or tissues"/>
</dbReference>
<dbReference type="GO" id="GO:0005737">
    <property type="term" value="C:cytoplasm"/>
    <property type="evidence" value="ECO:0000266"/>
    <property type="project" value="RGD"/>
</dbReference>
<dbReference type="GO" id="GO:0005789">
    <property type="term" value="C:endoplasmic reticulum membrane"/>
    <property type="evidence" value="ECO:0007669"/>
    <property type="project" value="UniProtKB-SubCell"/>
</dbReference>
<dbReference type="GO" id="GO:0000139">
    <property type="term" value="C:Golgi membrane"/>
    <property type="evidence" value="ECO:0007669"/>
    <property type="project" value="UniProtKB-SubCell"/>
</dbReference>
<dbReference type="GO" id="GO:0005634">
    <property type="term" value="C:nucleus"/>
    <property type="evidence" value="ECO:0000266"/>
    <property type="project" value="RGD"/>
</dbReference>
<dbReference type="GO" id="GO:0048471">
    <property type="term" value="C:perinuclear region of cytoplasm"/>
    <property type="evidence" value="ECO:0000266"/>
    <property type="project" value="RGD"/>
</dbReference>
<dbReference type="GO" id="GO:0000122">
    <property type="term" value="P:negative regulation of transcription by RNA polymerase II"/>
    <property type="evidence" value="ECO:0000266"/>
    <property type="project" value="RGD"/>
</dbReference>
<dbReference type="GO" id="GO:0045944">
    <property type="term" value="P:positive regulation of transcription by RNA polymerase II"/>
    <property type="evidence" value="ECO:0000266"/>
    <property type="project" value="RGD"/>
</dbReference>
<dbReference type="FunFam" id="2.60.40.10:FF:000431">
    <property type="entry name" value="motile sperm domain-containing protein 1"/>
    <property type="match status" value="1"/>
</dbReference>
<dbReference type="Gene3D" id="2.60.40.10">
    <property type="entry name" value="Immunoglobulins"/>
    <property type="match status" value="1"/>
</dbReference>
<dbReference type="InterPro" id="IPR013783">
    <property type="entry name" value="Ig-like_fold"/>
</dbReference>
<dbReference type="InterPro" id="IPR039283">
    <property type="entry name" value="MOSPD1/3"/>
</dbReference>
<dbReference type="InterPro" id="IPR000535">
    <property type="entry name" value="MSP_dom"/>
</dbReference>
<dbReference type="InterPro" id="IPR008962">
    <property type="entry name" value="PapD-like_sf"/>
</dbReference>
<dbReference type="PANTHER" id="PTHR34441">
    <property type="entry name" value="MOTILE SPERM DOMAIN-CONTAINING PROTEIN 1"/>
    <property type="match status" value="1"/>
</dbReference>
<dbReference type="PANTHER" id="PTHR34441:SF2">
    <property type="entry name" value="MOTILE SPERM DOMAIN-CONTAINING PROTEIN 1"/>
    <property type="match status" value="1"/>
</dbReference>
<dbReference type="Pfam" id="PF00635">
    <property type="entry name" value="Motile_Sperm"/>
    <property type="match status" value="1"/>
</dbReference>
<dbReference type="SUPFAM" id="SSF49354">
    <property type="entry name" value="PapD-like"/>
    <property type="match status" value="1"/>
</dbReference>
<dbReference type="PROSITE" id="PS50202">
    <property type="entry name" value="MSP"/>
    <property type="match status" value="1"/>
</dbReference>
<feature type="chain" id="PRO_0000213462" description="Motile sperm domain-containing protein 1">
    <location>
        <begin position="1"/>
        <end position="213"/>
    </location>
</feature>
<feature type="transmembrane region" description="Helical" evidence="2">
    <location>
        <begin position="159"/>
        <end position="179"/>
    </location>
</feature>
<feature type="transmembrane region" description="Helical" evidence="2">
    <location>
        <begin position="191"/>
        <end position="211"/>
    </location>
</feature>
<feature type="domain" description="MSP" evidence="3">
    <location>
        <begin position="16"/>
        <end position="143"/>
    </location>
</feature>
<feature type="short sequence motif" description="Nuclear export signal" evidence="1">
    <location>
        <begin position="205"/>
        <end position="208"/>
    </location>
</feature>
<gene>
    <name type="primary">Mospd1</name>
</gene>
<comment type="function">
    <text evidence="1">Plays a role in differentiation and/or proliferation of mesenchymal stem cells. Proposed to be involved in epithelial-to-mesenchymal transition (EMT). However, another study suggests that it is not required for EMT or stem cell self-renewal and acts during later stages of differentiation.</text>
</comment>
<comment type="subcellular location">
    <subcellularLocation>
        <location evidence="1">Endoplasmic reticulum membrane</location>
        <topology evidence="2">Multi-pass membrane protein</topology>
    </subcellularLocation>
    <subcellularLocation>
        <location evidence="1">Golgi apparatus membrane</location>
        <topology evidence="2">Multi-pass membrane protein</topology>
    </subcellularLocation>
</comment>
<protein>
    <recommendedName>
        <fullName>Motile sperm domain-containing protein 1</fullName>
    </recommendedName>
</protein>
<accession>Q5RJS6</accession>